<dbReference type="EMBL" id="CP000143">
    <property type="protein sequence ID" value="ABA79799.1"/>
    <property type="molecule type" value="Genomic_DNA"/>
</dbReference>
<dbReference type="RefSeq" id="WP_002720792.1">
    <property type="nucleotide sequence ID" value="NZ_CP030271.1"/>
</dbReference>
<dbReference type="RefSeq" id="YP_353700.1">
    <property type="nucleotide sequence ID" value="NC_007493.2"/>
</dbReference>
<dbReference type="SMR" id="Q3J085"/>
<dbReference type="STRING" id="272943.RSP_0626"/>
<dbReference type="EnsemblBacteria" id="ABA79799">
    <property type="protein sequence ID" value="ABA79799"/>
    <property type="gene ID" value="RSP_0626"/>
</dbReference>
<dbReference type="GeneID" id="67447372"/>
<dbReference type="KEGG" id="rsp:RSP_0626"/>
<dbReference type="PATRIC" id="fig|272943.9.peg.2573"/>
<dbReference type="eggNOG" id="COG0361">
    <property type="taxonomic scope" value="Bacteria"/>
</dbReference>
<dbReference type="OrthoDB" id="9803250at2"/>
<dbReference type="PhylomeDB" id="Q3J085"/>
<dbReference type="Proteomes" id="UP000002703">
    <property type="component" value="Chromosome 1"/>
</dbReference>
<dbReference type="GO" id="GO:0005829">
    <property type="term" value="C:cytosol"/>
    <property type="evidence" value="ECO:0007669"/>
    <property type="project" value="TreeGrafter"/>
</dbReference>
<dbReference type="GO" id="GO:0043022">
    <property type="term" value="F:ribosome binding"/>
    <property type="evidence" value="ECO:0007669"/>
    <property type="project" value="UniProtKB-UniRule"/>
</dbReference>
<dbReference type="GO" id="GO:0019843">
    <property type="term" value="F:rRNA binding"/>
    <property type="evidence" value="ECO:0007669"/>
    <property type="project" value="UniProtKB-UniRule"/>
</dbReference>
<dbReference type="GO" id="GO:0003743">
    <property type="term" value="F:translation initiation factor activity"/>
    <property type="evidence" value="ECO:0007669"/>
    <property type="project" value="UniProtKB-UniRule"/>
</dbReference>
<dbReference type="CDD" id="cd04451">
    <property type="entry name" value="S1_IF1"/>
    <property type="match status" value="1"/>
</dbReference>
<dbReference type="FunFam" id="2.40.50.140:FF:000002">
    <property type="entry name" value="Translation initiation factor IF-1"/>
    <property type="match status" value="1"/>
</dbReference>
<dbReference type="Gene3D" id="2.40.50.140">
    <property type="entry name" value="Nucleic acid-binding proteins"/>
    <property type="match status" value="1"/>
</dbReference>
<dbReference type="HAMAP" id="MF_00075">
    <property type="entry name" value="IF_1"/>
    <property type="match status" value="1"/>
</dbReference>
<dbReference type="InterPro" id="IPR012340">
    <property type="entry name" value="NA-bd_OB-fold"/>
</dbReference>
<dbReference type="InterPro" id="IPR006196">
    <property type="entry name" value="RNA-binding_domain_S1_IF1"/>
</dbReference>
<dbReference type="InterPro" id="IPR004368">
    <property type="entry name" value="TIF_IF1"/>
</dbReference>
<dbReference type="NCBIfam" id="TIGR00008">
    <property type="entry name" value="infA"/>
    <property type="match status" value="1"/>
</dbReference>
<dbReference type="PANTHER" id="PTHR33370">
    <property type="entry name" value="TRANSLATION INITIATION FACTOR IF-1, CHLOROPLASTIC"/>
    <property type="match status" value="1"/>
</dbReference>
<dbReference type="PANTHER" id="PTHR33370:SF1">
    <property type="entry name" value="TRANSLATION INITIATION FACTOR IF-1, CHLOROPLASTIC"/>
    <property type="match status" value="1"/>
</dbReference>
<dbReference type="Pfam" id="PF01176">
    <property type="entry name" value="eIF-1a"/>
    <property type="match status" value="1"/>
</dbReference>
<dbReference type="SUPFAM" id="SSF50249">
    <property type="entry name" value="Nucleic acid-binding proteins"/>
    <property type="match status" value="1"/>
</dbReference>
<dbReference type="PROSITE" id="PS50832">
    <property type="entry name" value="S1_IF1_TYPE"/>
    <property type="match status" value="1"/>
</dbReference>
<protein>
    <recommendedName>
        <fullName evidence="1">Translation initiation factor IF-1</fullName>
    </recommendedName>
</protein>
<proteinExistence type="inferred from homology"/>
<reference key="1">
    <citation type="submission" date="2005-09" db="EMBL/GenBank/DDBJ databases">
        <title>Complete sequence of chromosome 1 of Rhodobacter sphaeroides 2.4.1.</title>
        <authorList>
            <person name="Copeland A."/>
            <person name="Lucas S."/>
            <person name="Lapidus A."/>
            <person name="Barry K."/>
            <person name="Detter J.C."/>
            <person name="Glavina T."/>
            <person name="Hammon N."/>
            <person name="Israni S."/>
            <person name="Pitluck S."/>
            <person name="Richardson P."/>
            <person name="Mackenzie C."/>
            <person name="Choudhary M."/>
            <person name="Larimer F."/>
            <person name="Hauser L.J."/>
            <person name="Land M."/>
            <person name="Donohue T.J."/>
            <person name="Kaplan S."/>
        </authorList>
    </citation>
    <scope>NUCLEOTIDE SEQUENCE [LARGE SCALE GENOMIC DNA]</scope>
    <source>
        <strain>ATCC 17023 / DSM 158 / JCM 6121 / CCUG 31486 / LMG 2827 / NBRC 12203 / NCIMB 8253 / ATH 2.4.1.</strain>
    </source>
</reference>
<sequence length="72" mass="8250">MAKEDTLEFPGVVKELLPNATFRVELDNGHELIAVMAGKMRKNRIRVLAGDKVQVEMTPYDLSKGRINYRFK</sequence>
<feature type="chain" id="PRO_0000263854" description="Translation initiation factor IF-1">
    <location>
        <begin position="1"/>
        <end position="72"/>
    </location>
</feature>
<feature type="domain" description="S1-like" evidence="1">
    <location>
        <begin position="1"/>
        <end position="72"/>
    </location>
</feature>
<evidence type="ECO:0000255" key="1">
    <source>
        <dbReference type="HAMAP-Rule" id="MF_00075"/>
    </source>
</evidence>
<accession>Q3J085</accession>
<organism>
    <name type="scientific">Cereibacter sphaeroides (strain ATCC 17023 / DSM 158 / JCM 6121 / CCUG 31486 / LMG 2827 / NBRC 12203 / NCIMB 8253 / ATH 2.4.1.)</name>
    <name type="common">Rhodobacter sphaeroides</name>
    <dbReference type="NCBI Taxonomy" id="272943"/>
    <lineage>
        <taxon>Bacteria</taxon>
        <taxon>Pseudomonadati</taxon>
        <taxon>Pseudomonadota</taxon>
        <taxon>Alphaproteobacteria</taxon>
        <taxon>Rhodobacterales</taxon>
        <taxon>Paracoccaceae</taxon>
        <taxon>Cereibacter</taxon>
    </lineage>
</organism>
<comment type="function">
    <text evidence="1">One of the essential components for the initiation of protein synthesis. Stabilizes the binding of IF-2 and IF-3 on the 30S subunit to which N-formylmethionyl-tRNA(fMet) subsequently binds. Helps modulate mRNA selection, yielding the 30S pre-initiation complex (PIC). Upon addition of the 50S ribosomal subunit IF-1, IF-2 and IF-3 are released leaving the mature 70S translation initiation complex.</text>
</comment>
<comment type="subunit">
    <text evidence="1">Component of the 30S ribosomal translation pre-initiation complex which assembles on the 30S ribosome in the order IF-2 and IF-3, IF-1 and N-formylmethionyl-tRNA(fMet); mRNA recruitment can occur at any time during PIC assembly.</text>
</comment>
<comment type="subcellular location">
    <subcellularLocation>
        <location evidence="1">Cytoplasm</location>
    </subcellularLocation>
</comment>
<comment type="similarity">
    <text evidence="1">Belongs to the IF-1 family.</text>
</comment>
<name>IF1_CERS4</name>
<gene>
    <name evidence="1" type="primary">infA</name>
    <name type="ordered locus">RHOS4_22310</name>
    <name type="ordered locus">RSP_0626</name>
</gene>
<keyword id="KW-0963">Cytoplasm</keyword>
<keyword id="KW-0396">Initiation factor</keyword>
<keyword id="KW-0648">Protein biosynthesis</keyword>
<keyword id="KW-1185">Reference proteome</keyword>
<keyword id="KW-0694">RNA-binding</keyword>
<keyword id="KW-0699">rRNA-binding</keyword>